<keyword id="KW-0963">Cytoplasm</keyword>
<keyword id="KW-0274">FAD</keyword>
<keyword id="KW-0285">Flavoprotein</keyword>
<keyword id="KW-0489">Methyltransferase</keyword>
<keyword id="KW-0520">NAD</keyword>
<keyword id="KW-0521">NADP</keyword>
<keyword id="KW-0808">Transferase</keyword>
<keyword id="KW-0819">tRNA processing</keyword>
<proteinExistence type="inferred from homology"/>
<evidence type="ECO:0000255" key="1">
    <source>
        <dbReference type="HAMAP-Rule" id="MF_01037"/>
    </source>
</evidence>
<feature type="chain" id="PRO_1000149480" description="Methylenetetrahydrofolate--tRNA-(uracil-5-)-methyltransferase TrmFO">
    <location>
        <begin position="1"/>
        <end position="444"/>
    </location>
</feature>
<feature type="binding site" evidence="1">
    <location>
        <begin position="10"/>
        <end position="15"/>
    </location>
    <ligand>
        <name>FAD</name>
        <dbReference type="ChEBI" id="CHEBI:57692"/>
    </ligand>
</feature>
<accession>C1CDT9</accession>
<sequence length="444" mass="49300">MSQSYINVIGAGLAGSEAAYQIAERGIPVKLYEMRGVKSTPQHKTDNFAELVCSNSLRGDALTNAVGLLKEEMRRLGSVILESAEATRVPAGGALAVDRDGFSQMVTEKVVNHPLIEVVRDEITELPTDVITVVATGPLTSDALAEKIHALNNGDGFYFYDAAAPIIDVNTIDMSKVYLKSRYDKGEAAYLNAPMTKQEFMDFHEALVNAEEAPLNSFEKEKYFEGCMPIEVMAKRGIKTMLYGPMKPVGLEYPDDYTGPRDGEFKTPYAVVQLRQDNAAGSLYNIVGFQTHLKWGEQKRVFQMIPGLENAEFVRYGVMHRNSYMDSPNLLEQTYRSKKQPNLFFAGQMTGVEGYVESAASGLVAGINAARLFKEESEVIFPETTAIGSLAHYITHADSKHFQPMNVNFGIIKELEGERIRDKKARYEKIAERALADLEEFLTV</sequence>
<gene>
    <name evidence="1" type="primary">trmFO</name>
    <name type="ordered locus">SPJ_0882</name>
</gene>
<organism>
    <name type="scientific">Streptococcus pneumoniae (strain JJA)</name>
    <dbReference type="NCBI Taxonomy" id="488222"/>
    <lineage>
        <taxon>Bacteria</taxon>
        <taxon>Bacillati</taxon>
        <taxon>Bacillota</taxon>
        <taxon>Bacilli</taxon>
        <taxon>Lactobacillales</taxon>
        <taxon>Streptococcaceae</taxon>
        <taxon>Streptococcus</taxon>
    </lineage>
</organism>
<protein>
    <recommendedName>
        <fullName evidence="1">Methylenetetrahydrofolate--tRNA-(uracil-5-)-methyltransferase TrmFO</fullName>
        <ecNumber evidence="1">2.1.1.74</ecNumber>
    </recommendedName>
    <alternativeName>
        <fullName evidence="1">Folate-dependent tRNA (uracil-5-)-methyltransferase</fullName>
    </alternativeName>
    <alternativeName>
        <fullName evidence="1">Folate-dependent tRNA(M-5-U54)-methyltransferase</fullName>
    </alternativeName>
</protein>
<comment type="function">
    <text evidence="1">Catalyzes the folate-dependent formation of 5-methyl-uridine at position 54 (M-5-U54) in all tRNAs.</text>
</comment>
<comment type="catalytic activity">
    <reaction evidence="1">
        <text>uridine(54) in tRNA + (6R)-5,10-methylene-5,6,7,8-tetrahydrofolate + NADH + H(+) = 5-methyluridine(54) in tRNA + (6S)-5,6,7,8-tetrahydrofolate + NAD(+)</text>
        <dbReference type="Rhea" id="RHEA:16873"/>
        <dbReference type="Rhea" id="RHEA-COMP:10167"/>
        <dbReference type="Rhea" id="RHEA-COMP:10193"/>
        <dbReference type="ChEBI" id="CHEBI:15378"/>
        <dbReference type="ChEBI" id="CHEBI:15636"/>
        <dbReference type="ChEBI" id="CHEBI:57453"/>
        <dbReference type="ChEBI" id="CHEBI:57540"/>
        <dbReference type="ChEBI" id="CHEBI:57945"/>
        <dbReference type="ChEBI" id="CHEBI:65315"/>
        <dbReference type="ChEBI" id="CHEBI:74447"/>
        <dbReference type="EC" id="2.1.1.74"/>
    </reaction>
</comment>
<comment type="catalytic activity">
    <reaction evidence="1">
        <text>uridine(54) in tRNA + (6R)-5,10-methylene-5,6,7,8-tetrahydrofolate + NADPH + H(+) = 5-methyluridine(54) in tRNA + (6S)-5,6,7,8-tetrahydrofolate + NADP(+)</text>
        <dbReference type="Rhea" id="RHEA:62372"/>
        <dbReference type="Rhea" id="RHEA-COMP:10167"/>
        <dbReference type="Rhea" id="RHEA-COMP:10193"/>
        <dbReference type="ChEBI" id="CHEBI:15378"/>
        <dbReference type="ChEBI" id="CHEBI:15636"/>
        <dbReference type="ChEBI" id="CHEBI:57453"/>
        <dbReference type="ChEBI" id="CHEBI:57783"/>
        <dbReference type="ChEBI" id="CHEBI:58349"/>
        <dbReference type="ChEBI" id="CHEBI:65315"/>
        <dbReference type="ChEBI" id="CHEBI:74447"/>
        <dbReference type="EC" id="2.1.1.74"/>
    </reaction>
</comment>
<comment type="cofactor">
    <cofactor evidence="1">
        <name>FAD</name>
        <dbReference type="ChEBI" id="CHEBI:57692"/>
    </cofactor>
</comment>
<comment type="subcellular location">
    <subcellularLocation>
        <location evidence="1">Cytoplasm</location>
    </subcellularLocation>
</comment>
<comment type="similarity">
    <text evidence="1">Belongs to the MnmG family. TrmFO subfamily.</text>
</comment>
<dbReference type="EC" id="2.1.1.74" evidence="1"/>
<dbReference type="EMBL" id="CP000919">
    <property type="protein sequence ID" value="ACO19789.1"/>
    <property type="molecule type" value="Genomic_DNA"/>
</dbReference>
<dbReference type="RefSeq" id="WP_000083731.1">
    <property type="nucleotide sequence ID" value="NC_012466.1"/>
</dbReference>
<dbReference type="SMR" id="C1CDT9"/>
<dbReference type="GeneID" id="45653713"/>
<dbReference type="KEGG" id="sjj:SPJ_0882"/>
<dbReference type="HOGENOM" id="CLU_033057_1_0_9"/>
<dbReference type="Proteomes" id="UP000002206">
    <property type="component" value="Chromosome"/>
</dbReference>
<dbReference type="GO" id="GO:0005829">
    <property type="term" value="C:cytosol"/>
    <property type="evidence" value="ECO:0007669"/>
    <property type="project" value="TreeGrafter"/>
</dbReference>
<dbReference type="GO" id="GO:0050660">
    <property type="term" value="F:flavin adenine dinucleotide binding"/>
    <property type="evidence" value="ECO:0007669"/>
    <property type="project" value="UniProtKB-UniRule"/>
</dbReference>
<dbReference type="GO" id="GO:0047151">
    <property type="term" value="F:tRNA (uracil(54)-C5)-methyltransferase activity, 5,10-methylenetetrahydrofolate-dependent"/>
    <property type="evidence" value="ECO:0007669"/>
    <property type="project" value="UniProtKB-UniRule"/>
</dbReference>
<dbReference type="GO" id="GO:0030488">
    <property type="term" value="P:tRNA methylation"/>
    <property type="evidence" value="ECO:0007669"/>
    <property type="project" value="TreeGrafter"/>
</dbReference>
<dbReference type="GO" id="GO:0002098">
    <property type="term" value="P:tRNA wobble uridine modification"/>
    <property type="evidence" value="ECO:0007669"/>
    <property type="project" value="TreeGrafter"/>
</dbReference>
<dbReference type="FunFam" id="3.50.50.60:FF:000035">
    <property type="entry name" value="Methylenetetrahydrofolate--tRNA-(uracil-5-)-methyltransferase TrmFO"/>
    <property type="match status" value="1"/>
</dbReference>
<dbReference type="FunFam" id="3.50.50.60:FF:000040">
    <property type="entry name" value="Methylenetetrahydrofolate--tRNA-(uracil-5-)-methyltransferase TrmFO"/>
    <property type="match status" value="1"/>
</dbReference>
<dbReference type="Gene3D" id="3.50.50.60">
    <property type="entry name" value="FAD/NAD(P)-binding domain"/>
    <property type="match status" value="2"/>
</dbReference>
<dbReference type="HAMAP" id="MF_01037">
    <property type="entry name" value="TrmFO"/>
    <property type="match status" value="1"/>
</dbReference>
<dbReference type="InterPro" id="IPR036188">
    <property type="entry name" value="FAD/NAD-bd_sf"/>
</dbReference>
<dbReference type="InterPro" id="IPR002218">
    <property type="entry name" value="MnmG-rel"/>
</dbReference>
<dbReference type="InterPro" id="IPR020595">
    <property type="entry name" value="MnmG-rel_CS"/>
</dbReference>
<dbReference type="InterPro" id="IPR040131">
    <property type="entry name" value="MnmG_N"/>
</dbReference>
<dbReference type="InterPro" id="IPR004417">
    <property type="entry name" value="TrmFO"/>
</dbReference>
<dbReference type="NCBIfam" id="TIGR00137">
    <property type="entry name" value="gid_trmFO"/>
    <property type="match status" value="1"/>
</dbReference>
<dbReference type="NCBIfam" id="NF003739">
    <property type="entry name" value="PRK05335.1"/>
    <property type="match status" value="1"/>
</dbReference>
<dbReference type="PANTHER" id="PTHR11806">
    <property type="entry name" value="GLUCOSE INHIBITED DIVISION PROTEIN A"/>
    <property type="match status" value="1"/>
</dbReference>
<dbReference type="PANTHER" id="PTHR11806:SF2">
    <property type="entry name" value="METHYLENETETRAHYDROFOLATE--TRNA-(URACIL-5-)-METHYLTRANSFERASE TRMFO"/>
    <property type="match status" value="1"/>
</dbReference>
<dbReference type="Pfam" id="PF01134">
    <property type="entry name" value="GIDA"/>
    <property type="match status" value="1"/>
</dbReference>
<dbReference type="SUPFAM" id="SSF51905">
    <property type="entry name" value="FAD/NAD(P)-binding domain"/>
    <property type="match status" value="1"/>
</dbReference>
<dbReference type="PROSITE" id="PS01281">
    <property type="entry name" value="GIDA_2"/>
    <property type="match status" value="1"/>
</dbReference>
<reference key="1">
    <citation type="journal article" date="2010" name="Genome Biol.">
        <title>Structure and dynamics of the pan-genome of Streptococcus pneumoniae and closely related species.</title>
        <authorList>
            <person name="Donati C."/>
            <person name="Hiller N.L."/>
            <person name="Tettelin H."/>
            <person name="Muzzi A."/>
            <person name="Croucher N.J."/>
            <person name="Angiuoli S.V."/>
            <person name="Oggioni M."/>
            <person name="Dunning Hotopp J.C."/>
            <person name="Hu F.Z."/>
            <person name="Riley D.R."/>
            <person name="Covacci A."/>
            <person name="Mitchell T.J."/>
            <person name="Bentley S.D."/>
            <person name="Kilian M."/>
            <person name="Ehrlich G.D."/>
            <person name="Rappuoli R."/>
            <person name="Moxon E.R."/>
            <person name="Masignani V."/>
        </authorList>
    </citation>
    <scope>NUCLEOTIDE SEQUENCE [LARGE SCALE GENOMIC DNA]</scope>
    <source>
        <strain>JJA</strain>
    </source>
</reference>
<name>TRMFO_STRZJ</name>